<reference key="1">
    <citation type="submission" date="2007-06" db="EMBL/GenBank/DDBJ databases">
        <title>Complete sequence of Methanococcus maripaludis C7.</title>
        <authorList>
            <consortium name="US DOE Joint Genome Institute"/>
            <person name="Copeland A."/>
            <person name="Lucas S."/>
            <person name="Lapidus A."/>
            <person name="Barry K."/>
            <person name="Glavina del Rio T."/>
            <person name="Dalin E."/>
            <person name="Tice H."/>
            <person name="Pitluck S."/>
            <person name="Clum A."/>
            <person name="Schmutz J."/>
            <person name="Larimer F."/>
            <person name="Land M."/>
            <person name="Hauser L."/>
            <person name="Kyrpides N."/>
            <person name="Anderson I."/>
            <person name="Sieprawska-Lupa M."/>
            <person name="Whitman W.B."/>
            <person name="Richardson P."/>
        </authorList>
    </citation>
    <scope>NUCLEOTIDE SEQUENCE [LARGE SCALE GENOMIC DNA]</scope>
    <source>
        <strain>C7 / ATCC BAA-1331</strain>
    </source>
</reference>
<comment type="function">
    <text evidence="1">Catalyzes the deamination of three SAM-derived enzymatic products, namely 5'-deoxyadenosine, S-adenosyl-L-homocysteine, and 5'-methylthioadenosine, to produce the inosine analogs. Can also deaminate adenosine. The preferred substrate for this enzyme is 5'-deoxyadenosine, but all these substrates are efficiently deaminated. Likely functions in a S-adenosyl-L-methionine (SAM) recycling pathway from S-adenosyl-L-homocysteine (SAH) produced from SAM-dependent methylation reactions. May also be involved in the recycling of 5'-deoxyadenosine, whereupon the 5'-deoxyribose moiety of 5'-deoxyinosine is further metabolized to deoxyhexoses used for the biosynthesis of aromatic amino acids in methanogens.</text>
</comment>
<comment type="catalytic activity">
    <reaction evidence="1">
        <text>5'-deoxyadenosine + H2O + H(+) = 5'-deoxyinosine + NH4(+)</text>
        <dbReference type="Rhea" id="RHEA:42892"/>
        <dbReference type="ChEBI" id="CHEBI:15377"/>
        <dbReference type="ChEBI" id="CHEBI:15378"/>
        <dbReference type="ChEBI" id="CHEBI:17319"/>
        <dbReference type="ChEBI" id="CHEBI:28938"/>
        <dbReference type="ChEBI" id="CHEBI:82775"/>
        <dbReference type="EC" id="3.5.4.41"/>
    </reaction>
    <physiologicalReaction direction="left-to-right" evidence="1">
        <dbReference type="Rhea" id="RHEA:42893"/>
    </physiologicalReaction>
</comment>
<comment type="catalytic activity">
    <reaction evidence="1">
        <text>S-adenosyl-L-homocysteine + H2O + H(+) = S-inosyl-L-homocysteine + NH4(+)</text>
        <dbReference type="Rhea" id="RHEA:20716"/>
        <dbReference type="ChEBI" id="CHEBI:15377"/>
        <dbReference type="ChEBI" id="CHEBI:15378"/>
        <dbReference type="ChEBI" id="CHEBI:28938"/>
        <dbReference type="ChEBI" id="CHEBI:57856"/>
        <dbReference type="ChEBI" id="CHEBI:57985"/>
        <dbReference type="EC" id="3.5.4.28"/>
    </reaction>
    <physiologicalReaction direction="left-to-right" evidence="1">
        <dbReference type="Rhea" id="RHEA:20717"/>
    </physiologicalReaction>
</comment>
<comment type="catalytic activity">
    <reaction evidence="1">
        <text>S-methyl-5'-thioadenosine + H2O + H(+) = S-methyl-5'-thioinosine + NH4(+)</text>
        <dbReference type="Rhea" id="RHEA:25025"/>
        <dbReference type="ChEBI" id="CHEBI:15377"/>
        <dbReference type="ChEBI" id="CHEBI:15378"/>
        <dbReference type="ChEBI" id="CHEBI:17509"/>
        <dbReference type="ChEBI" id="CHEBI:28938"/>
        <dbReference type="ChEBI" id="CHEBI:48595"/>
        <dbReference type="EC" id="3.5.4.31"/>
    </reaction>
    <physiologicalReaction direction="left-to-right" evidence="1">
        <dbReference type="Rhea" id="RHEA:25026"/>
    </physiologicalReaction>
</comment>
<comment type="catalytic activity">
    <reaction evidence="1">
        <text>adenosine + H2O + H(+) = inosine + NH4(+)</text>
        <dbReference type="Rhea" id="RHEA:24408"/>
        <dbReference type="ChEBI" id="CHEBI:15377"/>
        <dbReference type="ChEBI" id="CHEBI:15378"/>
        <dbReference type="ChEBI" id="CHEBI:16335"/>
        <dbReference type="ChEBI" id="CHEBI:17596"/>
        <dbReference type="ChEBI" id="CHEBI:28938"/>
        <dbReference type="EC" id="3.5.4.4"/>
    </reaction>
    <physiologicalReaction direction="left-to-right" evidence="1">
        <dbReference type="Rhea" id="RHEA:24409"/>
    </physiologicalReaction>
</comment>
<comment type="cofactor">
    <cofactor evidence="1">
        <name>Zn(2+)</name>
        <dbReference type="ChEBI" id="CHEBI:29105"/>
    </cofactor>
    <text evidence="1">Binds 1 zinc ion per subunit.</text>
</comment>
<comment type="pathway">
    <text evidence="1">Amino-acid biosynthesis; S-adenosyl-L-methionine biosynthesis.</text>
</comment>
<comment type="subunit">
    <text evidence="1">Homotetramer.</text>
</comment>
<comment type="miscellaneous">
    <text evidence="1">SAH is a product of SAM methyltransferases and is known to be a feedback inhibitor of these enzymes. As a result of this inhibition, organisms have evolved efficient enzymes to metabolize SAH via different pathways. The pathway found in methanogens differs from the canonical pathway, it uses the deamination of S-adenosyl-L-homocysteine to form S-inosyl-L-homocysteine for the regeneration of SAM from S-adenosyl-L-homocysteine. 5'-deoxyadenosine is a radical SAM enzyme reaction product which strongly inhibits radical SAM enzymes. A pathway for removing this product must be present in methanogens where the MTA/SAH nucleosidase which normally metabolizes this compound is absent.</text>
</comment>
<comment type="similarity">
    <text evidence="1">Belongs to the metallo-dependent hydrolases superfamily. MTA/SAH deaminase family.</text>
</comment>
<evidence type="ECO:0000255" key="1">
    <source>
        <dbReference type="HAMAP-Rule" id="MF_01281"/>
    </source>
</evidence>
<proteinExistence type="inferred from homology"/>
<keyword id="KW-0378">Hydrolase</keyword>
<keyword id="KW-0479">Metal-binding</keyword>
<keyword id="KW-0862">Zinc</keyword>
<feature type="chain" id="PRO_0000312474" description="5'-deoxyadenosine deaminase">
    <location>
        <begin position="1"/>
        <end position="422"/>
    </location>
</feature>
<feature type="binding site" evidence="1">
    <location>
        <position position="57"/>
    </location>
    <ligand>
        <name>Zn(2+)</name>
        <dbReference type="ChEBI" id="CHEBI:29105"/>
    </ligand>
</feature>
<feature type="binding site" evidence="1">
    <location>
        <position position="59"/>
    </location>
    <ligand>
        <name>Zn(2+)</name>
        <dbReference type="ChEBI" id="CHEBI:29105"/>
    </ligand>
</feature>
<feature type="binding site" evidence="1">
    <location>
        <position position="86"/>
    </location>
    <ligand>
        <name>substrate</name>
    </ligand>
</feature>
<feature type="binding site" evidence="1">
    <location>
        <position position="178"/>
    </location>
    <ligand>
        <name>substrate</name>
    </ligand>
</feature>
<feature type="binding site" evidence="1">
    <location>
        <position position="205"/>
    </location>
    <ligand>
        <name>Zn(2+)</name>
        <dbReference type="ChEBI" id="CHEBI:29105"/>
    </ligand>
</feature>
<feature type="binding site" evidence="1">
    <location>
        <position position="208"/>
    </location>
    <ligand>
        <name>substrate</name>
    </ligand>
</feature>
<feature type="binding site" evidence="1">
    <location>
        <position position="294"/>
    </location>
    <ligand>
        <name>substrate</name>
    </ligand>
</feature>
<feature type="binding site" evidence="1">
    <location>
        <position position="294"/>
    </location>
    <ligand>
        <name>Zn(2+)</name>
        <dbReference type="ChEBI" id="CHEBI:29105"/>
    </ligand>
</feature>
<sequence>MILVKDAIINGKKQDLLVEGNIIKKIGNISISEVSKDETEIIDGKNCVLIPGLVNTHTHVPMSLFRGVADDIPLMEWLSGHIWPMESKLNEKIVYAGTLLGTVEMIKSGTTAFNDMYFFLDSIIKAVDETGIRSTIAYGMIDLFDEEKREKELKTARKSLETIKNLNNSRITGALGPHAPYTCSKELLESTNTLAREYNVPIHIHMNETLDEINQVVEKTGMRPFEYLNSFGFFNDVNTICAHCVHLSDSEIQIMKEKNIFAAHNPVSNLKLASGVSPVLKLLENNVPVTLGTDGCGSNNNMNLFEEIKAAALIHKGVNLNPVAVTAKEAFEFATLNGAKALNINSGEIKEGKLADFVIINMKKPYLTPKENIESHLVYSFNGVVDTVVIDGKIVLNDGKMVTIDEEKVYELAEEAYLELTK</sequence>
<protein>
    <recommendedName>
        <fullName evidence="1">5'-deoxyadenosine deaminase</fullName>
        <shortName evidence="1">5'-dA deaminase</shortName>
        <ecNumber evidence="1">3.5.4.41</ecNumber>
    </recommendedName>
    <alternativeName>
        <fullName evidence="1">5'-methylthioadenosine deaminase</fullName>
        <shortName evidence="1">MTA deaminase</shortName>
        <ecNumber evidence="1">3.5.4.31</ecNumber>
    </alternativeName>
    <alternativeName>
        <fullName evidence="1">Adenosine deaminase</fullName>
        <ecNumber evidence="1">3.5.4.4</ecNumber>
    </alternativeName>
    <alternativeName>
        <fullName evidence="1">S-adenosylhomocysteine deaminase</fullName>
        <shortName evidence="1">SAH deaminase</shortName>
        <ecNumber evidence="1">3.5.4.28</ecNumber>
    </alternativeName>
</protein>
<name>DADD_METM7</name>
<gene>
    <name evidence="1" type="primary">dadD</name>
    <name type="ordered locus">MmarC7_0735</name>
</gene>
<accession>A6VH76</accession>
<organism>
    <name type="scientific">Methanococcus maripaludis (strain C7 / ATCC BAA-1331)</name>
    <dbReference type="NCBI Taxonomy" id="426368"/>
    <lineage>
        <taxon>Archaea</taxon>
        <taxon>Methanobacteriati</taxon>
        <taxon>Methanobacteriota</taxon>
        <taxon>Methanomada group</taxon>
        <taxon>Methanococci</taxon>
        <taxon>Methanococcales</taxon>
        <taxon>Methanococcaceae</taxon>
        <taxon>Methanococcus</taxon>
    </lineage>
</organism>
<dbReference type="EC" id="3.5.4.41" evidence="1"/>
<dbReference type="EC" id="3.5.4.31" evidence="1"/>
<dbReference type="EC" id="3.5.4.4" evidence="1"/>
<dbReference type="EC" id="3.5.4.28" evidence="1"/>
<dbReference type="EMBL" id="CP000745">
    <property type="protein sequence ID" value="ABR65802.1"/>
    <property type="molecule type" value="Genomic_DNA"/>
</dbReference>
<dbReference type="SMR" id="A6VH76"/>
<dbReference type="STRING" id="426368.MmarC7_0735"/>
<dbReference type="KEGG" id="mmz:MmarC7_0735"/>
<dbReference type="eggNOG" id="arCOG00695">
    <property type="taxonomic scope" value="Archaea"/>
</dbReference>
<dbReference type="HOGENOM" id="CLU_012358_2_1_2"/>
<dbReference type="OrthoDB" id="372084at2157"/>
<dbReference type="UniPathway" id="UPA00315"/>
<dbReference type="GO" id="GO:0090613">
    <property type="term" value="F:5'-deoxyadenosine deaminase activity"/>
    <property type="evidence" value="ECO:0007669"/>
    <property type="project" value="UniProtKB-UniRule"/>
</dbReference>
<dbReference type="GO" id="GO:0090614">
    <property type="term" value="F:5'-methylthioadenosine deaminase activity"/>
    <property type="evidence" value="ECO:0007669"/>
    <property type="project" value="UniProtKB-EC"/>
</dbReference>
<dbReference type="GO" id="GO:0004000">
    <property type="term" value="F:adenosine deaminase activity"/>
    <property type="evidence" value="ECO:0007669"/>
    <property type="project" value="UniProtKB-UniRule"/>
</dbReference>
<dbReference type="GO" id="GO:0046872">
    <property type="term" value="F:metal ion binding"/>
    <property type="evidence" value="ECO:0007669"/>
    <property type="project" value="UniProtKB-KW"/>
</dbReference>
<dbReference type="GO" id="GO:0050270">
    <property type="term" value="F:S-adenosylhomocysteine deaminase activity"/>
    <property type="evidence" value="ECO:0007669"/>
    <property type="project" value="UniProtKB-EC"/>
</dbReference>
<dbReference type="GO" id="GO:0006556">
    <property type="term" value="P:S-adenosylmethionine biosynthetic process"/>
    <property type="evidence" value="ECO:0007669"/>
    <property type="project" value="UniProtKB-UniRule"/>
</dbReference>
<dbReference type="CDD" id="cd01298">
    <property type="entry name" value="ATZ_TRZ_like"/>
    <property type="match status" value="1"/>
</dbReference>
<dbReference type="FunFam" id="3.20.20.140:FF:000014">
    <property type="entry name" value="5-methylthioadenosine/S-adenosylhomocysteine deaminase"/>
    <property type="match status" value="1"/>
</dbReference>
<dbReference type="Gene3D" id="3.20.20.140">
    <property type="entry name" value="Metal-dependent hydrolases"/>
    <property type="match status" value="1"/>
</dbReference>
<dbReference type="Gene3D" id="2.30.40.10">
    <property type="entry name" value="Urease, subunit C, domain 1"/>
    <property type="match status" value="1"/>
</dbReference>
<dbReference type="HAMAP" id="MF_01281">
    <property type="entry name" value="MTA_SAH_deamin"/>
    <property type="match status" value="1"/>
</dbReference>
<dbReference type="InterPro" id="IPR006680">
    <property type="entry name" value="Amidohydro-rel"/>
</dbReference>
<dbReference type="InterPro" id="IPR023512">
    <property type="entry name" value="Deaminase_MtaD/DadD"/>
</dbReference>
<dbReference type="InterPro" id="IPR011059">
    <property type="entry name" value="Metal-dep_hydrolase_composite"/>
</dbReference>
<dbReference type="InterPro" id="IPR032466">
    <property type="entry name" value="Metal_Hydrolase"/>
</dbReference>
<dbReference type="InterPro" id="IPR050287">
    <property type="entry name" value="MTA/SAH_deaminase"/>
</dbReference>
<dbReference type="PANTHER" id="PTHR43794:SF11">
    <property type="entry name" value="AMIDOHYDROLASE-RELATED DOMAIN-CONTAINING PROTEIN"/>
    <property type="match status" value="1"/>
</dbReference>
<dbReference type="PANTHER" id="PTHR43794">
    <property type="entry name" value="AMINOHYDROLASE SSNA-RELATED"/>
    <property type="match status" value="1"/>
</dbReference>
<dbReference type="Pfam" id="PF01979">
    <property type="entry name" value="Amidohydro_1"/>
    <property type="match status" value="1"/>
</dbReference>
<dbReference type="SUPFAM" id="SSF51338">
    <property type="entry name" value="Composite domain of metallo-dependent hydrolases"/>
    <property type="match status" value="1"/>
</dbReference>
<dbReference type="SUPFAM" id="SSF51556">
    <property type="entry name" value="Metallo-dependent hydrolases"/>
    <property type="match status" value="1"/>
</dbReference>